<keyword id="KW-0106">Calcium</keyword>
<keyword id="KW-0109">Calcium transport</keyword>
<keyword id="KW-0256">Endoplasmic reticulum</keyword>
<keyword id="KW-0406">Ion transport</keyword>
<keyword id="KW-0464">Manganese</keyword>
<keyword id="KW-0472">Membrane</keyword>
<keyword id="KW-0479">Metal-binding</keyword>
<keyword id="KW-1185">Reference proteome</keyword>
<keyword id="KW-0812">Transmembrane</keyword>
<keyword id="KW-1133">Transmembrane helix</keyword>
<keyword id="KW-0813">Transport</keyword>
<keyword id="KW-0926">Vacuole</keyword>
<reference key="1">
    <citation type="journal article" date="2002" name="Nature">
        <title>The genome sequence of Schizosaccharomyces pombe.</title>
        <authorList>
            <person name="Wood V."/>
            <person name="Gwilliam R."/>
            <person name="Rajandream M.A."/>
            <person name="Lyne M.H."/>
            <person name="Lyne R."/>
            <person name="Stewart A."/>
            <person name="Sgouros J.G."/>
            <person name="Peat N."/>
            <person name="Hayles J."/>
            <person name="Baker S.G."/>
            <person name="Basham D."/>
            <person name="Bowman S."/>
            <person name="Brooks K."/>
            <person name="Brown D."/>
            <person name="Brown S."/>
            <person name="Chillingworth T."/>
            <person name="Churcher C.M."/>
            <person name="Collins M."/>
            <person name="Connor R."/>
            <person name="Cronin A."/>
            <person name="Davis P."/>
            <person name="Feltwell T."/>
            <person name="Fraser A."/>
            <person name="Gentles S."/>
            <person name="Goble A."/>
            <person name="Hamlin N."/>
            <person name="Harris D.E."/>
            <person name="Hidalgo J."/>
            <person name="Hodgson G."/>
            <person name="Holroyd S."/>
            <person name="Hornsby T."/>
            <person name="Howarth S."/>
            <person name="Huckle E.J."/>
            <person name="Hunt S."/>
            <person name="Jagels K."/>
            <person name="James K.D."/>
            <person name="Jones L."/>
            <person name="Jones M."/>
            <person name="Leather S."/>
            <person name="McDonald S."/>
            <person name="McLean J."/>
            <person name="Mooney P."/>
            <person name="Moule S."/>
            <person name="Mungall K.L."/>
            <person name="Murphy L.D."/>
            <person name="Niblett D."/>
            <person name="Odell C."/>
            <person name="Oliver K."/>
            <person name="O'Neil S."/>
            <person name="Pearson D."/>
            <person name="Quail M.A."/>
            <person name="Rabbinowitsch E."/>
            <person name="Rutherford K.M."/>
            <person name="Rutter S."/>
            <person name="Saunders D."/>
            <person name="Seeger K."/>
            <person name="Sharp S."/>
            <person name="Skelton J."/>
            <person name="Simmonds M.N."/>
            <person name="Squares R."/>
            <person name="Squares S."/>
            <person name="Stevens K."/>
            <person name="Taylor K."/>
            <person name="Taylor R.G."/>
            <person name="Tivey A."/>
            <person name="Walsh S.V."/>
            <person name="Warren T."/>
            <person name="Whitehead S."/>
            <person name="Woodward J.R."/>
            <person name="Volckaert G."/>
            <person name="Aert R."/>
            <person name="Robben J."/>
            <person name="Grymonprez B."/>
            <person name="Weltjens I."/>
            <person name="Vanstreels E."/>
            <person name="Rieger M."/>
            <person name="Schaefer M."/>
            <person name="Mueller-Auer S."/>
            <person name="Gabel C."/>
            <person name="Fuchs M."/>
            <person name="Duesterhoeft A."/>
            <person name="Fritzc C."/>
            <person name="Holzer E."/>
            <person name="Moestl D."/>
            <person name="Hilbert H."/>
            <person name="Borzym K."/>
            <person name="Langer I."/>
            <person name="Beck A."/>
            <person name="Lehrach H."/>
            <person name="Reinhardt R."/>
            <person name="Pohl T.M."/>
            <person name="Eger P."/>
            <person name="Zimmermann W."/>
            <person name="Wedler H."/>
            <person name="Wambutt R."/>
            <person name="Purnelle B."/>
            <person name="Goffeau A."/>
            <person name="Cadieu E."/>
            <person name="Dreano S."/>
            <person name="Gloux S."/>
            <person name="Lelaure V."/>
            <person name="Mottier S."/>
            <person name="Galibert F."/>
            <person name="Aves S.J."/>
            <person name="Xiang Z."/>
            <person name="Hunt C."/>
            <person name="Moore K."/>
            <person name="Hurst S.M."/>
            <person name="Lucas M."/>
            <person name="Rochet M."/>
            <person name="Gaillardin C."/>
            <person name="Tallada V.A."/>
            <person name="Garzon A."/>
            <person name="Thode G."/>
            <person name="Daga R.R."/>
            <person name="Cruzado L."/>
            <person name="Jimenez J."/>
            <person name="Sanchez M."/>
            <person name="del Rey F."/>
            <person name="Benito J."/>
            <person name="Dominguez A."/>
            <person name="Revuelta J.L."/>
            <person name="Moreno S."/>
            <person name="Armstrong J."/>
            <person name="Forsburg S.L."/>
            <person name="Cerutti L."/>
            <person name="Lowe T."/>
            <person name="McCombie W.R."/>
            <person name="Paulsen I."/>
            <person name="Potashkin J."/>
            <person name="Shpakovski G.V."/>
            <person name="Ussery D."/>
            <person name="Barrell B.G."/>
            <person name="Nurse P."/>
        </authorList>
    </citation>
    <scope>NUCLEOTIDE SEQUENCE [LARGE SCALE GENOMIC DNA]</scope>
    <source>
        <strain>972 / ATCC 24843</strain>
    </source>
</reference>
<reference key="2">
    <citation type="journal article" date="2006" name="Nat. Biotechnol.">
        <title>ORFeome cloning and global analysis of protein localization in the fission yeast Schizosaccharomyces pombe.</title>
        <authorList>
            <person name="Matsuyama A."/>
            <person name="Arai R."/>
            <person name="Yashiroda Y."/>
            <person name="Shirai A."/>
            <person name="Kamata A."/>
            <person name="Sekido S."/>
            <person name="Kobayashi Y."/>
            <person name="Hashimoto A."/>
            <person name="Hamamoto M."/>
            <person name="Hiraoka Y."/>
            <person name="Horinouchi S."/>
            <person name="Yoshida M."/>
        </authorList>
    </citation>
    <scope>SUBCELLULAR LOCATION [LARGE SCALE ANALYSIS]</scope>
</reference>
<proteinExistence type="inferred from homology"/>
<dbReference type="EMBL" id="CU329672">
    <property type="protein sequence ID" value="CAA18637.1"/>
    <property type="molecule type" value="Genomic_DNA"/>
</dbReference>
<dbReference type="PIR" id="T41141">
    <property type="entry name" value="T41141"/>
</dbReference>
<dbReference type="PIR" id="T41639">
    <property type="entry name" value="T41639"/>
</dbReference>
<dbReference type="RefSeq" id="NP_588042.1">
    <property type="nucleotide sequence ID" value="NM_001023034.2"/>
</dbReference>
<dbReference type="SMR" id="O59768"/>
<dbReference type="BioGRID" id="275958">
    <property type="interactions" value="2"/>
</dbReference>
<dbReference type="FunCoup" id="O59768">
    <property type="interactions" value="34"/>
</dbReference>
<dbReference type="STRING" id="284812.O59768"/>
<dbReference type="iPTMnet" id="O59768"/>
<dbReference type="PaxDb" id="4896-SPCC1795.02c.1"/>
<dbReference type="EnsemblFungi" id="SPCC1795.02c.1">
    <property type="protein sequence ID" value="SPCC1795.02c.1:pep"/>
    <property type="gene ID" value="SPCC1795.02c"/>
</dbReference>
<dbReference type="PomBase" id="SPCC1795.02c">
    <property type="gene designation" value="vcx1"/>
</dbReference>
<dbReference type="VEuPathDB" id="FungiDB:SPCC1795.02c"/>
<dbReference type="eggNOG" id="KOG1397">
    <property type="taxonomic scope" value="Eukaryota"/>
</dbReference>
<dbReference type="HOGENOM" id="CLU_008721_2_1_1"/>
<dbReference type="InParanoid" id="O59768"/>
<dbReference type="OMA" id="AVMITCN"/>
<dbReference type="PhylomeDB" id="O59768"/>
<dbReference type="PRO" id="PR:O59768"/>
<dbReference type="Proteomes" id="UP000002485">
    <property type="component" value="Chromosome III"/>
</dbReference>
<dbReference type="GO" id="GO:0005783">
    <property type="term" value="C:endoplasmic reticulum"/>
    <property type="evidence" value="ECO:0007005"/>
    <property type="project" value="PomBase"/>
</dbReference>
<dbReference type="GO" id="GO:0005789">
    <property type="term" value="C:endoplasmic reticulum membrane"/>
    <property type="evidence" value="ECO:0007669"/>
    <property type="project" value="UniProtKB-SubCell"/>
</dbReference>
<dbReference type="GO" id="GO:0000329">
    <property type="term" value="C:fungal-type vacuole membrane"/>
    <property type="evidence" value="ECO:0000318"/>
    <property type="project" value="GO_Central"/>
</dbReference>
<dbReference type="GO" id="GO:0015369">
    <property type="term" value="F:calcium:proton antiporter activity"/>
    <property type="evidence" value="ECO:0000318"/>
    <property type="project" value="GO_Central"/>
</dbReference>
<dbReference type="GO" id="GO:0046872">
    <property type="term" value="F:metal ion binding"/>
    <property type="evidence" value="ECO:0007669"/>
    <property type="project" value="UniProtKB-KW"/>
</dbReference>
<dbReference type="GO" id="GO:0140146">
    <property type="term" value="P:calcium ion import into vacuole"/>
    <property type="evidence" value="ECO:0000303"/>
    <property type="project" value="PomBase"/>
</dbReference>
<dbReference type="GO" id="GO:0070588">
    <property type="term" value="P:calcium ion transmembrane transport"/>
    <property type="evidence" value="ECO:0000318"/>
    <property type="project" value="GO_Central"/>
</dbReference>
<dbReference type="GO" id="GO:0006874">
    <property type="term" value="P:intracellular calcium ion homeostasis"/>
    <property type="evidence" value="ECO:0000318"/>
    <property type="project" value="GO_Central"/>
</dbReference>
<dbReference type="Gene3D" id="1.20.1420.30">
    <property type="entry name" value="NCX, central ion-binding region"/>
    <property type="match status" value="1"/>
</dbReference>
<dbReference type="InterPro" id="IPR004713">
    <property type="entry name" value="CaH_exchang"/>
</dbReference>
<dbReference type="InterPro" id="IPR004798">
    <property type="entry name" value="CAX-like"/>
</dbReference>
<dbReference type="InterPro" id="IPR004837">
    <property type="entry name" value="NaCa_Exmemb"/>
</dbReference>
<dbReference type="InterPro" id="IPR044880">
    <property type="entry name" value="NCX_ion-bd_dom_sf"/>
</dbReference>
<dbReference type="NCBIfam" id="TIGR00846">
    <property type="entry name" value="caca2"/>
    <property type="match status" value="1"/>
</dbReference>
<dbReference type="NCBIfam" id="TIGR00378">
    <property type="entry name" value="cax"/>
    <property type="match status" value="1"/>
</dbReference>
<dbReference type="PANTHER" id="PTHR31503">
    <property type="entry name" value="VACUOLAR CALCIUM ION TRANSPORTER"/>
    <property type="match status" value="1"/>
</dbReference>
<dbReference type="PANTHER" id="PTHR31503:SF22">
    <property type="entry name" value="VACUOLAR CALCIUM ION TRANSPORTER"/>
    <property type="match status" value="1"/>
</dbReference>
<dbReference type="Pfam" id="PF01699">
    <property type="entry name" value="Na_Ca_ex"/>
    <property type="match status" value="2"/>
</dbReference>
<accession>O59768</accession>
<evidence type="ECO:0000250" key="1"/>
<evidence type="ECO:0000255" key="2"/>
<evidence type="ECO:0000269" key="3">
    <source>
    </source>
</evidence>
<evidence type="ECO:0000305" key="4"/>
<name>VCX1_SCHPO</name>
<protein>
    <recommendedName>
        <fullName>Vacuolar calcium ion transporter</fullName>
    </recommendedName>
    <alternativeName>
        <fullName>Vacuolar Ca(2+)/H(+) exchanger</fullName>
    </alternativeName>
</protein>
<organism>
    <name type="scientific">Schizosaccharomyces pombe (strain 972 / ATCC 24843)</name>
    <name type="common">Fission yeast</name>
    <dbReference type="NCBI Taxonomy" id="284812"/>
    <lineage>
        <taxon>Eukaryota</taxon>
        <taxon>Fungi</taxon>
        <taxon>Dikarya</taxon>
        <taxon>Ascomycota</taxon>
        <taxon>Taphrinomycotina</taxon>
        <taxon>Schizosaccharomycetes</taxon>
        <taxon>Schizosaccharomycetales</taxon>
        <taxon>Schizosaccharomycetaceae</taxon>
        <taxon>Schizosaccharomyces</taxon>
    </lineage>
</organism>
<feature type="chain" id="PRO_0000352843" description="Vacuolar calcium ion transporter">
    <location>
        <begin position="1"/>
        <end position="412"/>
    </location>
</feature>
<feature type="topological domain" description="Cytoplasmic" evidence="1">
    <location>
        <begin position="1"/>
        <end position="55"/>
    </location>
</feature>
<feature type="transmembrane region" description="Helical" evidence="2">
    <location>
        <begin position="56"/>
        <end position="76"/>
    </location>
</feature>
<feature type="topological domain" description="Lumenal" evidence="1">
    <location>
        <begin position="77"/>
        <end position="83"/>
    </location>
</feature>
<feature type="transmembrane region" description="Helical" evidence="2">
    <location>
        <begin position="84"/>
        <end position="104"/>
    </location>
</feature>
<feature type="topological domain" description="Cytoplasmic" evidence="1">
    <location>
        <begin position="105"/>
        <end position="114"/>
    </location>
</feature>
<feature type="transmembrane region" description="Helical" evidence="2">
    <location>
        <begin position="115"/>
        <end position="135"/>
    </location>
</feature>
<feature type="topological domain" description="Lumenal" evidence="1">
    <location>
        <begin position="136"/>
        <end position="148"/>
    </location>
</feature>
<feature type="transmembrane region" description="Helical" evidence="2">
    <location>
        <begin position="149"/>
        <end position="169"/>
    </location>
</feature>
<feature type="topological domain" description="Cytoplasmic" evidence="1">
    <location>
        <begin position="170"/>
        <end position="177"/>
    </location>
</feature>
<feature type="transmembrane region" description="Helical" evidence="2">
    <location>
        <begin position="178"/>
        <end position="198"/>
    </location>
</feature>
<feature type="topological domain" description="Lumenal" evidence="1">
    <location>
        <begin position="199"/>
        <end position="215"/>
    </location>
</feature>
<feature type="transmembrane region" description="Helical" evidence="2">
    <location>
        <begin position="216"/>
        <end position="236"/>
    </location>
</feature>
<feature type="topological domain" description="Cytoplasmic" evidence="1">
    <location>
        <begin position="237"/>
        <end position="264"/>
    </location>
</feature>
<feature type="transmembrane region" description="Helical" evidence="2">
    <location>
        <begin position="265"/>
        <end position="285"/>
    </location>
</feature>
<feature type="topological domain" description="Lumenal" evidence="1">
    <location>
        <begin position="286"/>
        <end position="299"/>
    </location>
</feature>
<feature type="transmembrane region" description="Helical" evidence="2">
    <location>
        <begin position="300"/>
        <end position="320"/>
    </location>
</feature>
<feature type="topological domain" description="Cytoplasmic" evidence="1">
    <location>
        <begin position="321"/>
        <end position="334"/>
    </location>
</feature>
<feature type="transmembrane region" description="Helical" evidence="2">
    <location>
        <begin position="335"/>
        <end position="355"/>
    </location>
</feature>
<feature type="topological domain" description="Lumenal" evidence="1">
    <location>
        <begin position="356"/>
        <end position="358"/>
    </location>
</feature>
<feature type="transmembrane region" description="Helical" evidence="2">
    <location>
        <begin position="359"/>
        <end position="379"/>
    </location>
</feature>
<feature type="topological domain" description="Cytoplasmic" evidence="1">
    <location>
        <begin position="380"/>
        <end position="389"/>
    </location>
</feature>
<feature type="transmembrane region" description="Helical" evidence="2">
    <location>
        <begin position="390"/>
        <end position="410"/>
    </location>
</feature>
<feature type="topological domain" description="Lumenal" evidence="1">
    <location>
        <begin position="411"/>
        <end position="412"/>
    </location>
</feature>
<sequence length="412" mass="45108">MIERLKIAKNRLEAMNSFNFPAQDRHERAPLLGSEYDHSMARQLSLLNVVGMTKSVLMSSYFNLMLVFVPIGLIAGWFEWNAKSVFILNMLAIIPLASLLSFATEQLSIISGPTLGALLNASFGNAIELIVGVLALKRGELRIVQSSLLGSILSNLLLVFGMCLVTTGIRREITTFNITVAQTMIAMLALSTATILIPATFHYSLPDNANSENALLHVSRGTAVIVLIVYVLLLVFQLKTHKHVCHDPSEVEEETEPRILGLRSSIAMLAIVTVFVSLCADYLVGSIDQLVEEVNISKTFVGLVILPVVGNAAEHVTAIVVSYRGQMDLALGVAIGSSIQIALFLAPFLVIVGWIISQPLTLYFESLETVILFVSVFLVNYLIQDGATHWLEGVQLLALYAIVVLAFFYYPQ</sequence>
<gene>
    <name type="primary">vcx1</name>
    <name type="ORF">SPCC1795.02c</name>
    <name type="ORF">SPCC895.01</name>
</gene>
<comment type="function">
    <text evidence="1">Has a role in promoting intracellular calcium ion sequestration via the exchange of calcium ions for hydrogen ions across the vacuolar membrane. Involved also in manganese ion homeostasis via its uptake into the vacuole (By similarity).</text>
</comment>
<comment type="subcellular location">
    <subcellularLocation>
        <location evidence="1">Vacuole membrane</location>
        <topology evidence="1">Multi-pass membrane protein</topology>
    </subcellularLocation>
    <subcellularLocation>
        <location evidence="3">Endoplasmic reticulum membrane</location>
        <topology evidence="3">Multi-pass membrane protein</topology>
    </subcellularLocation>
</comment>
<comment type="similarity">
    <text evidence="4">Belongs to the Ca(2+):cation antiporter (CaCA) (TC 2.A.19) family.</text>
</comment>